<protein>
    <recommendedName>
        <fullName>Nitric oxide synthase-interacting protein</fullName>
    </recommendedName>
    <alternativeName>
        <fullName>E3 ubiquitin-protein ligase NOSIP</fullName>
        <ecNumber>2.3.2.27</ecNumber>
    </alternativeName>
    <alternativeName>
        <fullName evidence="7">RING-type E3 ubiquitin transferase NOSIP</fullName>
    </alternativeName>
    <alternativeName>
        <fullName>eNOS-interacting protein</fullName>
    </alternativeName>
</protein>
<proteinExistence type="evidence at protein level"/>
<comment type="function">
    <text evidence="1 3 5 6">E3 ubiquitin-protein ligase that is essential for proper development of the forebrain, the eye, and the face. Catalyzes monoubiquitination of serine/threonine-protein phosphatase 2A (PP2A) catalytic subunit PPP2CA/PPP2CB (By similarity). Negatively regulates nitric oxide production by inducing NOS1 and NOS3 translocation to actin cytoskeleton and inhibiting their enzymatic activity (PubMed:11149895, PubMed:15548660, PubMed:16135813).</text>
</comment>
<comment type="catalytic activity">
    <reaction>
        <text>S-ubiquitinyl-[E2 ubiquitin-conjugating enzyme]-L-cysteine + [acceptor protein]-L-lysine = [E2 ubiquitin-conjugating enzyme]-L-cysteine + N(6)-ubiquitinyl-[acceptor protein]-L-lysine.</text>
        <dbReference type="EC" id="2.3.2.27"/>
    </reaction>
</comment>
<comment type="subunit">
    <text evidence="1 3 5">Interacts with NOS1 and NOS3 (PubMed:11149895, PubMed:15548660). Interacts with PP2A holoenzyme, containing PPP2CA, PPP2CB, PPP2R1A and PPP2R2A subunits (By similarity).</text>
</comment>
<comment type="interaction">
    <interactant intactId="EBI-1051889">
        <id>Q9Y314</id>
    </interactant>
    <interactant intactId="EBI-11741890">
        <id>Q86VK4-3</id>
        <label>ZNF410</label>
    </interactant>
    <organismsDiffer>false</organismsDiffer>
    <experiments>3</experiments>
</comment>
<comment type="subcellular location">
    <subcellularLocation>
        <location evidence="5 6">Cytoplasm</location>
    </subcellularLocation>
    <subcellularLocation>
        <location evidence="5 6">Nucleus</location>
    </subcellularLocation>
    <text>Translocates from nucleus to cytoplasm in the G2 phase of the cell cycle (PubMed:16135813).</text>
</comment>
<comment type="tissue specificity">
    <text evidence="3">Expressed in heart, brain and lung. Present in endothelial cells (at protein level).</text>
</comment>
<comment type="domain">
    <text>The U-box-like region is a truncated U-box domain. It is unknown whether it is functional or not.</text>
</comment>
<comment type="similarity">
    <text evidence="7">Belongs to the NOSIP family.</text>
</comment>
<organism>
    <name type="scientific">Homo sapiens</name>
    <name type="common">Human</name>
    <dbReference type="NCBI Taxonomy" id="9606"/>
    <lineage>
        <taxon>Eukaryota</taxon>
        <taxon>Metazoa</taxon>
        <taxon>Chordata</taxon>
        <taxon>Craniata</taxon>
        <taxon>Vertebrata</taxon>
        <taxon>Euteleostomi</taxon>
        <taxon>Mammalia</taxon>
        <taxon>Eutheria</taxon>
        <taxon>Euarchontoglires</taxon>
        <taxon>Primates</taxon>
        <taxon>Haplorrhini</taxon>
        <taxon>Catarrhini</taxon>
        <taxon>Hominidae</taxon>
        <taxon>Homo</taxon>
    </lineage>
</organism>
<accession>Q9Y314</accession>
<accession>Q96FD2</accession>
<gene>
    <name type="primary">NOSIP</name>
    <name type="ORF">CGI-25</name>
</gene>
<keyword id="KW-0002">3D-structure</keyword>
<keyword id="KW-0963">Cytoplasm</keyword>
<keyword id="KW-0217">Developmental protein</keyword>
<keyword id="KW-0539">Nucleus</keyword>
<keyword id="KW-0597">Phosphoprotein</keyword>
<keyword id="KW-1267">Proteomics identification</keyword>
<keyword id="KW-1185">Reference proteome</keyword>
<keyword id="KW-0808">Transferase</keyword>
<keyword id="KW-0833">Ubl conjugation pathway</keyword>
<sequence>MTRHGKNCTAGAVYTYHEKKKDTAASGYGTQNIRLSRDAVKDFDCCCLSLQPCHDPVVTPDGYLYEREAILEYILHQKKEIARQMKAYEKQRGTRREEQKELQRAASQDHVRGFLEKESAIVSRPLNPFTAKALSGTSPDDVQPGPSVGPPSKDKDKVLPSFWIPSLTPEAKATKLEKPSRTVTCPMSGKPLRMSDLTPVHFTPLDSSVDRVGLITRSERYVCAVTRDSLSNATPCAVLRPSGAVVTLECVEKLIRKDMVDPVTGDKLTDRDIIVLQRGGTGFAGSGVKLQAEKSRPVMQA</sequence>
<dbReference type="EC" id="2.3.2.27"/>
<dbReference type="EMBL" id="AF132959">
    <property type="protein sequence ID" value="AAD27734.1"/>
    <property type="molecule type" value="mRNA"/>
</dbReference>
<dbReference type="EMBL" id="BC009299">
    <property type="protein sequence ID" value="AAH09299.1"/>
    <property type="molecule type" value="mRNA"/>
</dbReference>
<dbReference type="EMBL" id="BC010077">
    <property type="protein sequence ID" value="AAH10077.1"/>
    <property type="molecule type" value="mRNA"/>
</dbReference>
<dbReference type="EMBL" id="BC011249">
    <property type="protein sequence ID" value="AAH11249.1"/>
    <property type="molecule type" value="mRNA"/>
</dbReference>
<dbReference type="CCDS" id="CCDS12772.1"/>
<dbReference type="RefSeq" id="NP_001257889.1">
    <property type="nucleotide sequence ID" value="NM_001270960.2"/>
</dbReference>
<dbReference type="RefSeq" id="NP_057037.1">
    <property type="nucleotide sequence ID" value="NM_015953.5"/>
</dbReference>
<dbReference type="RefSeq" id="XP_016882340.1">
    <property type="nucleotide sequence ID" value="XM_017026851.2"/>
</dbReference>
<dbReference type="RefSeq" id="XP_016882341.1">
    <property type="nucleotide sequence ID" value="XM_017026852.2"/>
</dbReference>
<dbReference type="RefSeq" id="XP_054177117.1">
    <property type="nucleotide sequence ID" value="XM_054321142.1"/>
</dbReference>
<dbReference type="RefSeq" id="XP_054177119.1">
    <property type="nucleotide sequence ID" value="XM_054321144.1"/>
</dbReference>
<dbReference type="PDB" id="8C6J">
    <property type="method" value="EM"/>
    <property type="resolution" value="2.80 A"/>
    <property type="chains" value="CN=1-301"/>
</dbReference>
<dbReference type="PDB" id="9FMD">
    <property type="method" value="EM"/>
    <property type="resolution" value="3.30 A"/>
    <property type="chains" value="NO=1-301"/>
</dbReference>
<dbReference type="PDBsum" id="8C6J"/>
<dbReference type="PDBsum" id="9FMD"/>
<dbReference type="EMDB" id="EMD-16452"/>
<dbReference type="SMR" id="Q9Y314"/>
<dbReference type="BioGRID" id="119261">
    <property type="interactions" value="104"/>
</dbReference>
<dbReference type="FunCoup" id="Q9Y314">
    <property type="interactions" value="3441"/>
</dbReference>
<dbReference type="IntAct" id="Q9Y314">
    <property type="interactions" value="24"/>
</dbReference>
<dbReference type="MINT" id="Q9Y314"/>
<dbReference type="STRING" id="9606.ENSP00000343497"/>
<dbReference type="GlyGen" id="Q9Y314">
    <property type="glycosylation" value="3 sites, 2 N-linked glycans (2 sites), 1 O-linked glycan (1 site)"/>
</dbReference>
<dbReference type="iPTMnet" id="Q9Y314"/>
<dbReference type="PhosphoSitePlus" id="Q9Y314"/>
<dbReference type="SwissPalm" id="Q9Y314"/>
<dbReference type="BioMuta" id="NOSIP"/>
<dbReference type="DMDM" id="74735248"/>
<dbReference type="jPOST" id="Q9Y314"/>
<dbReference type="MassIVE" id="Q9Y314"/>
<dbReference type="PaxDb" id="9606-ENSP00000470034"/>
<dbReference type="PeptideAtlas" id="Q9Y314"/>
<dbReference type="ProteomicsDB" id="85958"/>
<dbReference type="Pumba" id="Q9Y314"/>
<dbReference type="Antibodypedia" id="32058">
    <property type="antibodies" value="178 antibodies from 28 providers"/>
</dbReference>
<dbReference type="DNASU" id="51070"/>
<dbReference type="Ensembl" id="ENST00000596358.6">
    <property type="protein sequence ID" value="ENSP00000470034.1"/>
    <property type="gene ID" value="ENSG00000142546.14"/>
</dbReference>
<dbReference type="GeneID" id="51070"/>
<dbReference type="KEGG" id="hsa:51070"/>
<dbReference type="MANE-Select" id="ENST00000596358.6">
    <property type="protein sequence ID" value="ENSP00000470034.1"/>
    <property type="RefSeq nucleotide sequence ID" value="NM_001270960.2"/>
    <property type="RefSeq protein sequence ID" value="NP_001257889.1"/>
</dbReference>
<dbReference type="UCSC" id="uc002pol.5">
    <property type="organism name" value="human"/>
</dbReference>
<dbReference type="AGR" id="HGNC:17946"/>
<dbReference type="CTD" id="51070"/>
<dbReference type="DisGeNET" id="51070"/>
<dbReference type="GeneCards" id="NOSIP"/>
<dbReference type="HGNC" id="HGNC:17946">
    <property type="gene designation" value="NOSIP"/>
</dbReference>
<dbReference type="HPA" id="ENSG00000142546">
    <property type="expression patterns" value="Low tissue specificity"/>
</dbReference>
<dbReference type="MIM" id="616759">
    <property type="type" value="gene"/>
</dbReference>
<dbReference type="neXtProt" id="NX_Q9Y314"/>
<dbReference type="OpenTargets" id="ENSG00000142546"/>
<dbReference type="PharmGKB" id="PA134989259"/>
<dbReference type="VEuPathDB" id="HostDB:ENSG00000142546"/>
<dbReference type="eggNOG" id="KOG3039">
    <property type="taxonomic scope" value="Eukaryota"/>
</dbReference>
<dbReference type="GeneTree" id="ENSGT00390000015505"/>
<dbReference type="HOGENOM" id="CLU_053742_0_0_1"/>
<dbReference type="InParanoid" id="Q9Y314"/>
<dbReference type="OrthoDB" id="116827at2759"/>
<dbReference type="PAN-GO" id="Q9Y314">
    <property type="GO annotations" value="1 GO annotation based on evolutionary models"/>
</dbReference>
<dbReference type="PhylomeDB" id="Q9Y314"/>
<dbReference type="TreeFam" id="TF314268"/>
<dbReference type="PathwayCommons" id="Q9Y314"/>
<dbReference type="Reactome" id="R-HSA-203754">
    <property type="pathway name" value="NOSIP mediated eNOS trafficking"/>
</dbReference>
<dbReference type="SignaLink" id="Q9Y314"/>
<dbReference type="SIGNOR" id="Q9Y314"/>
<dbReference type="BioGRID-ORCS" id="51070">
    <property type="hits" value="87 hits in 1219 CRISPR screens"/>
</dbReference>
<dbReference type="CD-CODE" id="91857CE7">
    <property type="entry name" value="Nucleolus"/>
</dbReference>
<dbReference type="CD-CODE" id="DEE660B4">
    <property type="entry name" value="Stress granule"/>
</dbReference>
<dbReference type="GeneWiki" id="NOSIP"/>
<dbReference type="GenomeRNAi" id="51070"/>
<dbReference type="Pharos" id="Q9Y314">
    <property type="development level" value="Tbio"/>
</dbReference>
<dbReference type="PRO" id="PR:Q9Y314"/>
<dbReference type="Proteomes" id="UP000005640">
    <property type="component" value="Chromosome 19"/>
</dbReference>
<dbReference type="RNAct" id="Q9Y314">
    <property type="molecule type" value="protein"/>
</dbReference>
<dbReference type="Bgee" id="ENSG00000142546">
    <property type="expression patterns" value="Expressed in left testis and 203 other cell types or tissues"/>
</dbReference>
<dbReference type="ExpressionAtlas" id="Q9Y314">
    <property type="expression patterns" value="baseline and differential"/>
</dbReference>
<dbReference type="GO" id="GO:0005737">
    <property type="term" value="C:cytoplasm"/>
    <property type="evidence" value="ECO:0000314"/>
    <property type="project" value="UniProtKB"/>
</dbReference>
<dbReference type="GO" id="GO:0005829">
    <property type="term" value="C:cytosol"/>
    <property type="evidence" value="ECO:0000304"/>
    <property type="project" value="Reactome"/>
</dbReference>
<dbReference type="GO" id="GO:0000139">
    <property type="term" value="C:Golgi membrane"/>
    <property type="evidence" value="ECO:0000304"/>
    <property type="project" value="Reactome"/>
</dbReference>
<dbReference type="GO" id="GO:0005654">
    <property type="term" value="C:nucleoplasm"/>
    <property type="evidence" value="ECO:0000314"/>
    <property type="project" value="HPA"/>
</dbReference>
<dbReference type="GO" id="GO:0005634">
    <property type="term" value="C:nucleus"/>
    <property type="evidence" value="ECO:0000314"/>
    <property type="project" value="UniProtKB"/>
</dbReference>
<dbReference type="GO" id="GO:0140313">
    <property type="term" value="F:molecular sequestering activity"/>
    <property type="evidence" value="ECO:0000353"/>
    <property type="project" value="UniProtKB"/>
</dbReference>
<dbReference type="GO" id="GO:0003723">
    <property type="term" value="F:RNA binding"/>
    <property type="evidence" value="ECO:0007005"/>
    <property type="project" value="UniProtKB"/>
</dbReference>
<dbReference type="GO" id="GO:0061630">
    <property type="term" value="F:ubiquitin protein ligase activity"/>
    <property type="evidence" value="ECO:0007669"/>
    <property type="project" value="InterPro"/>
</dbReference>
<dbReference type="GO" id="GO:0043086">
    <property type="term" value="P:negative regulation of catalytic activity"/>
    <property type="evidence" value="ECO:0000314"/>
    <property type="project" value="UniProtKB"/>
</dbReference>
<dbReference type="GO" id="GO:0051001">
    <property type="term" value="P:negative regulation of nitric-oxide synthase activity"/>
    <property type="evidence" value="ECO:0000314"/>
    <property type="project" value="UniProtKB"/>
</dbReference>
<dbReference type="GO" id="GO:0046209">
    <property type="term" value="P:nitric oxide metabolic process"/>
    <property type="evidence" value="ECO:0000304"/>
    <property type="project" value="Reactome"/>
</dbReference>
<dbReference type="GO" id="GO:0045428">
    <property type="term" value="P:regulation of nitric oxide biosynthetic process"/>
    <property type="evidence" value="ECO:0000315"/>
    <property type="project" value="UniProtKB"/>
</dbReference>
<dbReference type="CDD" id="cd16661">
    <property type="entry name" value="RING-Ubox1_NOSIP"/>
    <property type="match status" value="1"/>
</dbReference>
<dbReference type="CDD" id="cd16662">
    <property type="entry name" value="RING-Ubox2_NOSIP"/>
    <property type="match status" value="1"/>
</dbReference>
<dbReference type="FunFam" id="3.30.40.10:FF:000251">
    <property type="entry name" value="Nitric oxide synthase-interacting protein"/>
    <property type="match status" value="1"/>
</dbReference>
<dbReference type="FunFam" id="3.30.40.10:FF:001144">
    <property type="entry name" value="Nitric oxide synthase-interacting protein"/>
    <property type="match status" value="1"/>
</dbReference>
<dbReference type="Gene3D" id="3.30.40.10">
    <property type="entry name" value="Zinc/RING finger domain, C3HC4 (zinc finger)"/>
    <property type="match status" value="2"/>
</dbReference>
<dbReference type="InterPro" id="IPR016818">
    <property type="entry name" value="NOSIP"/>
</dbReference>
<dbReference type="InterPro" id="IPR031790">
    <property type="entry name" value="Znf-NOSIP"/>
</dbReference>
<dbReference type="InterPro" id="IPR013083">
    <property type="entry name" value="Znf_RING/FYVE/PHD"/>
</dbReference>
<dbReference type="PANTHER" id="PTHR13063">
    <property type="entry name" value="ENOS INTERACTING PROTEIN"/>
    <property type="match status" value="1"/>
</dbReference>
<dbReference type="PANTHER" id="PTHR13063:SF10">
    <property type="entry name" value="NITRIC OXIDE SYNTHASE-INTERACTING PROTEIN"/>
    <property type="match status" value="1"/>
</dbReference>
<dbReference type="Pfam" id="PF15906">
    <property type="entry name" value="zf-NOSIP"/>
    <property type="match status" value="1"/>
</dbReference>
<dbReference type="PIRSF" id="PIRSF023577">
    <property type="entry name" value="ENOS_interacting"/>
    <property type="match status" value="1"/>
</dbReference>
<dbReference type="SUPFAM" id="SSF57850">
    <property type="entry name" value="RING/U-box"/>
    <property type="match status" value="2"/>
</dbReference>
<evidence type="ECO:0000250" key="1">
    <source>
        <dbReference type="UniProtKB" id="Q9D6T0"/>
    </source>
</evidence>
<evidence type="ECO:0000256" key="2">
    <source>
        <dbReference type="SAM" id="MobiDB-lite"/>
    </source>
</evidence>
<evidence type="ECO:0000269" key="3">
    <source>
    </source>
</evidence>
<evidence type="ECO:0000269" key="4">
    <source>
    </source>
</evidence>
<evidence type="ECO:0000269" key="5">
    <source>
    </source>
</evidence>
<evidence type="ECO:0000269" key="6">
    <source>
    </source>
</evidence>
<evidence type="ECO:0000305" key="7"/>
<evidence type="ECO:0007744" key="8">
    <source>
    </source>
</evidence>
<evidence type="ECO:0007744" key="9">
    <source>
    </source>
</evidence>
<feature type="chain" id="PRO_0000280585" description="Nitric oxide synthase-interacting protein">
    <location>
        <begin position="1"/>
        <end position="301"/>
    </location>
</feature>
<feature type="region of interest" description="U-box-like">
    <location>
        <begin position="55"/>
        <end position="75"/>
    </location>
</feature>
<feature type="region of interest" description="Disordered" evidence="2">
    <location>
        <begin position="132"/>
        <end position="157"/>
    </location>
</feature>
<feature type="short sequence motif" description="Nuclear localization signal">
    <location>
        <begin position="78"/>
        <end position="101"/>
    </location>
</feature>
<feature type="modified residue" description="Phosphoserine" evidence="8">
    <location>
        <position position="36"/>
    </location>
</feature>
<feature type="modified residue" description="Phosphoserine" evidence="9">
    <location>
        <position position="107"/>
    </location>
</feature>
<feature type="sequence variant" id="VAR_031169" description="In dbSNP:rs17850728." evidence="4">
    <original>T</original>
    <variation>M</variation>
    <location>
        <position position="168"/>
    </location>
</feature>
<reference key="1">
    <citation type="journal article" date="2001" name="FASEB J.">
        <title>NOSIP, a novel modulator of endothelial nitric oxide synthase activity.</title>
        <authorList>
            <person name="Dedio J."/>
            <person name="Koenig P."/>
            <person name="Wohlfart P."/>
            <person name="Schroeder C."/>
            <person name="Kummer W."/>
            <person name="Mueller-Esterl W."/>
        </authorList>
    </citation>
    <scope>NUCLEOTIDE SEQUENCE [MRNA]</scope>
    <scope>TISSUE SPECIFICITY</scope>
    <scope>INTERACTION WITH NOS3</scope>
    <scope>FUNCTION</scope>
</reference>
<reference key="2">
    <citation type="journal article" date="2000" name="Genome Res.">
        <title>Identification of novel human genes evolutionarily conserved in Caenorhabditis elegans by comparative proteomics.</title>
        <authorList>
            <person name="Lai C.-H."/>
            <person name="Chou C.-Y."/>
            <person name="Ch'ang L.-Y."/>
            <person name="Liu C.-S."/>
            <person name="Lin W.-C."/>
        </authorList>
    </citation>
    <scope>NUCLEOTIDE SEQUENCE [LARGE SCALE MRNA]</scope>
</reference>
<reference key="3">
    <citation type="journal article" date="2004" name="Genome Res.">
        <title>The status, quality, and expansion of the NIH full-length cDNA project: the Mammalian Gene Collection (MGC).</title>
        <authorList>
            <consortium name="The MGC Project Team"/>
        </authorList>
    </citation>
    <scope>NUCLEOTIDE SEQUENCE [LARGE SCALE MRNA]</scope>
    <scope>VARIANT MET-168</scope>
    <source>
        <tissue>B-cell</tissue>
        <tissue>Brain</tissue>
        <tissue>Placenta</tissue>
    </source>
</reference>
<reference key="4">
    <citation type="journal article" date="2004" name="J. Neurosci.">
        <title>Nitric oxide synthase (NOS)-interacting protein interacts with neuronal NOS and regulates its distribution and activity.</title>
        <authorList>
            <person name="Dreyer J."/>
            <person name="Schleicher M."/>
            <person name="Tappe A."/>
            <person name="Schilling K."/>
            <person name="Kuner T."/>
            <person name="Kusumawidijaja G."/>
            <person name="Mueller-Esterl W."/>
            <person name="Oess S."/>
            <person name="Kuner R."/>
        </authorList>
    </citation>
    <scope>INTERACTION WITH NOS1</scope>
    <scope>SUBCELLULAR LOCATION</scope>
    <scope>FUNCTION</scope>
</reference>
<reference key="5">
    <citation type="journal article" date="2005" name="Mol. Cell. Biol.">
        <title>Cell cycle-regulated inactivation of endothelial NO synthase through NOSIP-dependent targeting to the cytoskeleton.</title>
        <authorList>
            <person name="Schleicher M."/>
            <person name="Brundin F."/>
            <person name="Gross S."/>
            <person name="Mueller-Esterl W."/>
            <person name="Oess S."/>
        </authorList>
    </citation>
    <scope>SUBCELLULAR LOCATION</scope>
    <scope>FUNCTION</scope>
</reference>
<reference key="6">
    <citation type="journal article" date="2006" name="Nat. Biotechnol.">
        <title>A probability-based approach for high-throughput protein phosphorylation analysis and site localization.</title>
        <authorList>
            <person name="Beausoleil S.A."/>
            <person name="Villen J."/>
            <person name="Gerber S.A."/>
            <person name="Rush J."/>
            <person name="Gygi S.P."/>
        </authorList>
    </citation>
    <scope>IDENTIFICATION BY MASS SPECTROMETRY [LARGE SCALE ANALYSIS]</scope>
    <source>
        <tissue>Cervix carcinoma</tissue>
    </source>
</reference>
<reference key="7">
    <citation type="journal article" date="2007" name="Science">
        <title>ATM and ATR substrate analysis reveals extensive protein networks responsive to DNA damage.</title>
        <authorList>
            <person name="Matsuoka S."/>
            <person name="Ballif B.A."/>
            <person name="Smogorzewska A."/>
            <person name="McDonald E.R. III"/>
            <person name="Hurov K.E."/>
            <person name="Luo J."/>
            <person name="Bakalarski C.E."/>
            <person name="Zhao Z."/>
            <person name="Solimini N."/>
            <person name="Lerenthal Y."/>
            <person name="Shiloh Y."/>
            <person name="Gygi S.P."/>
            <person name="Elledge S.J."/>
        </authorList>
    </citation>
    <scope>IDENTIFICATION BY MASS SPECTROMETRY [LARGE SCALE ANALYSIS]</scope>
    <source>
        <tissue>Embryonic kidney</tissue>
    </source>
</reference>
<reference key="8">
    <citation type="journal article" date="2008" name="Proc. Natl. Acad. Sci. U.S.A.">
        <title>A quantitative atlas of mitotic phosphorylation.</title>
        <authorList>
            <person name="Dephoure N."/>
            <person name="Zhou C."/>
            <person name="Villen J."/>
            <person name="Beausoleil S.A."/>
            <person name="Bakalarski C.E."/>
            <person name="Elledge S.J."/>
            <person name="Gygi S.P."/>
        </authorList>
    </citation>
    <scope>IDENTIFICATION BY MASS SPECTROMETRY [LARGE SCALE ANALYSIS]</scope>
    <source>
        <tissue>Cervix carcinoma</tissue>
    </source>
</reference>
<reference key="9">
    <citation type="journal article" date="2009" name="Anal. Chem.">
        <title>Lys-N and trypsin cover complementary parts of the phosphoproteome in a refined SCX-based approach.</title>
        <authorList>
            <person name="Gauci S."/>
            <person name="Helbig A.O."/>
            <person name="Slijper M."/>
            <person name="Krijgsveld J."/>
            <person name="Heck A.J."/>
            <person name="Mohammed S."/>
        </authorList>
    </citation>
    <scope>IDENTIFICATION BY MASS SPECTROMETRY [LARGE SCALE ANALYSIS]</scope>
</reference>
<reference key="10">
    <citation type="journal article" date="2010" name="Sci. Signal.">
        <title>Quantitative phosphoproteomics reveals widespread full phosphorylation site occupancy during mitosis.</title>
        <authorList>
            <person name="Olsen J.V."/>
            <person name="Vermeulen M."/>
            <person name="Santamaria A."/>
            <person name="Kumar C."/>
            <person name="Miller M.L."/>
            <person name="Jensen L.J."/>
            <person name="Gnad F."/>
            <person name="Cox J."/>
            <person name="Jensen T.S."/>
            <person name="Nigg E.A."/>
            <person name="Brunak S."/>
            <person name="Mann M."/>
        </authorList>
    </citation>
    <scope>IDENTIFICATION BY MASS SPECTROMETRY [LARGE SCALE ANALYSIS]</scope>
    <source>
        <tissue>Cervix carcinoma</tissue>
    </source>
</reference>
<reference key="11">
    <citation type="journal article" date="2011" name="BMC Syst. Biol.">
        <title>Initial characterization of the human central proteome.</title>
        <authorList>
            <person name="Burkard T.R."/>
            <person name="Planyavsky M."/>
            <person name="Kaupe I."/>
            <person name="Breitwieser F.P."/>
            <person name="Buerckstuemmer T."/>
            <person name="Bennett K.L."/>
            <person name="Superti-Furga G."/>
            <person name="Colinge J."/>
        </authorList>
    </citation>
    <scope>IDENTIFICATION BY MASS SPECTROMETRY [LARGE SCALE ANALYSIS]</scope>
</reference>
<reference key="12">
    <citation type="journal article" date="2013" name="J. Proteome Res.">
        <title>Toward a comprehensive characterization of a human cancer cell phosphoproteome.</title>
        <authorList>
            <person name="Zhou H."/>
            <person name="Di Palma S."/>
            <person name="Preisinger C."/>
            <person name="Peng M."/>
            <person name="Polat A.N."/>
            <person name="Heck A.J."/>
            <person name="Mohammed S."/>
        </authorList>
    </citation>
    <scope>PHOSPHORYLATION [LARGE SCALE ANALYSIS] AT SER-36</scope>
    <scope>IDENTIFICATION BY MASS SPECTROMETRY [LARGE SCALE ANALYSIS]</scope>
    <source>
        <tissue>Cervix carcinoma</tissue>
        <tissue>Erythroleukemia</tissue>
    </source>
</reference>
<reference key="13">
    <citation type="journal article" date="2014" name="J. Proteomics">
        <title>An enzyme assisted RP-RPLC approach for in-depth analysis of human liver phosphoproteome.</title>
        <authorList>
            <person name="Bian Y."/>
            <person name="Song C."/>
            <person name="Cheng K."/>
            <person name="Dong M."/>
            <person name="Wang F."/>
            <person name="Huang J."/>
            <person name="Sun D."/>
            <person name="Wang L."/>
            <person name="Ye M."/>
            <person name="Zou H."/>
        </authorList>
    </citation>
    <scope>PHOSPHORYLATION [LARGE SCALE ANALYSIS] AT SER-107</scope>
    <scope>IDENTIFICATION BY MASS SPECTROMETRY [LARGE SCALE ANALYSIS]</scope>
    <source>
        <tissue>Liver</tissue>
    </source>
</reference>
<name>NOSIP_HUMAN</name>